<organism>
    <name type="scientific">Streptococcus pneumoniae (strain 70585)</name>
    <dbReference type="NCBI Taxonomy" id="488221"/>
    <lineage>
        <taxon>Bacteria</taxon>
        <taxon>Bacillati</taxon>
        <taxon>Bacillota</taxon>
        <taxon>Bacilli</taxon>
        <taxon>Lactobacillales</taxon>
        <taxon>Streptococcaceae</taxon>
        <taxon>Streptococcus</taxon>
    </lineage>
</organism>
<feature type="chain" id="PRO_1000122932" description="Phosphoribosylaminoimidazole-succinocarboxamide synthase">
    <location>
        <begin position="1"/>
        <end position="235"/>
    </location>
</feature>
<evidence type="ECO:0000255" key="1">
    <source>
        <dbReference type="HAMAP-Rule" id="MF_00137"/>
    </source>
</evidence>
<accession>C1C9U8</accession>
<comment type="catalytic activity">
    <reaction evidence="1">
        <text>5-amino-1-(5-phospho-D-ribosyl)imidazole-4-carboxylate + L-aspartate + ATP = (2S)-2-[5-amino-1-(5-phospho-beta-D-ribosyl)imidazole-4-carboxamido]succinate + ADP + phosphate + 2 H(+)</text>
        <dbReference type="Rhea" id="RHEA:22628"/>
        <dbReference type="ChEBI" id="CHEBI:15378"/>
        <dbReference type="ChEBI" id="CHEBI:29991"/>
        <dbReference type="ChEBI" id="CHEBI:30616"/>
        <dbReference type="ChEBI" id="CHEBI:43474"/>
        <dbReference type="ChEBI" id="CHEBI:58443"/>
        <dbReference type="ChEBI" id="CHEBI:77657"/>
        <dbReference type="ChEBI" id="CHEBI:456216"/>
        <dbReference type="EC" id="6.3.2.6"/>
    </reaction>
</comment>
<comment type="pathway">
    <text evidence="1">Purine metabolism; IMP biosynthesis via de novo pathway; 5-amino-1-(5-phospho-D-ribosyl)imidazole-4-carboxamide from 5-amino-1-(5-phospho-D-ribosyl)imidazole-4-carboxylate: step 1/2.</text>
</comment>
<comment type="similarity">
    <text evidence="1">Belongs to the SAICAR synthetase family.</text>
</comment>
<name>PUR7_STRP7</name>
<protein>
    <recommendedName>
        <fullName evidence="1">Phosphoribosylaminoimidazole-succinocarboxamide synthase</fullName>
        <ecNumber evidence="1">6.3.2.6</ecNumber>
    </recommendedName>
    <alternativeName>
        <fullName evidence="1">SAICAR synthetase</fullName>
    </alternativeName>
</protein>
<keyword id="KW-0067">ATP-binding</keyword>
<keyword id="KW-0436">Ligase</keyword>
<keyword id="KW-0547">Nucleotide-binding</keyword>
<keyword id="KW-0658">Purine biosynthesis</keyword>
<gene>
    <name evidence="1" type="primary">purC</name>
    <name type="ordered locus">SP70585_0111</name>
</gene>
<reference key="1">
    <citation type="journal article" date="2010" name="Genome Biol.">
        <title>Structure and dynamics of the pan-genome of Streptococcus pneumoniae and closely related species.</title>
        <authorList>
            <person name="Donati C."/>
            <person name="Hiller N.L."/>
            <person name="Tettelin H."/>
            <person name="Muzzi A."/>
            <person name="Croucher N.J."/>
            <person name="Angiuoli S.V."/>
            <person name="Oggioni M."/>
            <person name="Dunning Hotopp J.C."/>
            <person name="Hu F.Z."/>
            <person name="Riley D.R."/>
            <person name="Covacci A."/>
            <person name="Mitchell T.J."/>
            <person name="Bentley S.D."/>
            <person name="Kilian M."/>
            <person name="Ehrlich G.D."/>
            <person name="Rappuoli R."/>
            <person name="Moxon E.R."/>
            <person name="Masignani V."/>
        </authorList>
    </citation>
    <scope>NUCLEOTIDE SEQUENCE [LARGE SCALE GENOMIC DNA]</scope>
    <source>
        <strain>70585</strain>
    </source>
</reference>
<dbReference type="EC" id="6.3.2.6" evidence="1"/>
<dbReference type="EMBL" id="CP000918">
    <property type="protein sequence ID" value="ACO16414.1"/>
    <property type="molecule type" value="Genomic_DNA"/>
</dbReference>
<dbReference type="RefSeq" id="WP_000043304.1">
    <property type="nucleotide sequence ID" value="NC_012468.1"/>
</dbReference>
<dbReference type="SMR" id="C1C9U8"/>
<dbReference type="KEGG" id="snm:SP70585_0111"/>
<dbReference type="HOGENOM" id="CLU_061495_2_0_9"/>
<dbReference type="UniPathway" id="UPA00074">
    <property type="reaction ID" value="UER00131"/>
</dbReference>
<dbReference type="Proteomes" id="UP000002211">
    <property type="component" value="Chromosome"/>
</dbReference>
<dbReference type="GO" id="GO:0005524">
    <property type="term" value="F:ATP binding"/>
    <property type="evidence" value="ECO:0007669"/>
    <property type="project" value="UniProtKB-KW"/>
</dbReference>
<dbReference type="GO" id="GO:0004639">
    <property type="term" value="F:phosphoribosylaminoimidazolesuccinocarboxamide synthase activity"/>
    <property type="evidence" value="ECO:0007669"/>
    <property type="project" value="UniProtKB-UniRule"/>
</dbReference>
<dbReference type="GO" id="GO:0006189">
    <property type="term" value="P:'de novo' IMP biosynthetic process"/>
    <property type="evidence" value="ECO:0007669"/>
    <property type="project" value="UniProtKB-UniRule"/>
</dbReference>
<dbReference type="GO" id="GO:0009236">
    <property type="term" value="P:cobalamin biosynthetic process"/>
    <property type="evidence" value="ECO:0007669"/>
    <property type="project" value="InterPro"/>
</dbReference>
<dbReference type="CDD" id="cd01415">
    <property type="entry name" value="SAICAR_synt_PurC"/>
    <property type="match status" value="1"/>
</dbReference>
<dbReference type="FunFam" id="3.30.200.20:FF:000189">
    <property type="entry name" value="Phosphoribosylaminoimidazole-succinocarboxamide synthase"/>
    <property type="match status" value="1"/>
</dbReference>
<dbReference type="FunFam" id="3.30.470.20:FF:000006">
    <property type="entry name" value="Phosphoribosylaminoimidazole-succinocarboxamide synthase"/>
    <property type="match status" value="1"/>
</dbReference>
<dbReference type="Gene3D" id="3.30.470.20">
    <property type="entry name" value="ATP-grasp fold, B domain"/>
    <property type="match status" value="1"/>
</dbReference>
<dbReference type="Gene3D" id="3.30.200.20">
    <property type="entry name" value="Phosphorylase Kinase, domain 1"/>
    <property type="match status" value="1"/>
</dbReference>
<dbReference type="HAMAP" id="MF_00137">
    <property type="entry name" value="SAICAR_synth"/>
    <property type="match status" value="1"/>
</dbReference>
<dbReference type="InterPro" id="IPR028923">
    <property type="entry name" value="SAICAR_synt/ADE2_N"/>
</dbReference>
<dbReference type="InterPro" id="IPR033934">
    <property type="entry name" value="SAICAR_synt_PurC"/>
</dbReference>
<dbReference type="InterPro" id="IPR001636">
    <property type="entry name" value="SAICAR_synth"/>
</dbReference>
<dbReference type="InterPro" id="IPR050089">
    <property type="entry name" value="SAICAR_synthetase"/>
</dbReference>
<dbReference type="InterPro" id="IPR018236">
    <property type="entry name" value="SAICAR_synthetase_CS"/>
</dbReference>
<dbReference type="NCBIfam" id="TIGR00081">
    <property type="entry name" value="purC"/>
    <property type="match status" value="1"/>
</dbReference>
<dbReference type="PANTHER" id="PTHR43599">
    <property type="entry name" value="MULTIFUNCTIONAL PROTEIN ADE2"/>
    <property type="match status" value="1"/>
</dbReference>
<dbReference type="PANTHER" id="PTHR43599:SF3">
    <property type="entry name" value="SI:DKEY-6E2.2"/>
    <property type="match status" value="1"/>
</dbReference>
<dbReference type="Pfam" id="PF01259">
    <property type="entry name" value="SAICAR_synt"/>
    <property type="match status" value="1"/>
</dbReference>
<dbReference type="SUPFAM" id="SSF56104">
    <property type="entry name" value="SAICAR synthase-like"/>
    <property type="match status" value="1"/>
</dbReference>
<dbReference type="PROSITE" id="PS01057">
    <property type="entry name" value="SAICAR_SYNTHETASE_1"/>
    <property type="match status" value="1"/>
</dbReference>
<dbReference type="PROSITE" id="PS01058">
    <property type="entry name" value="SAICAR_SYNTHETASE_2"/>
    <property type="match status" value="1"/>
</dbReference>
<sequence length="235" mass="26975">MSKQLIYSGKAKDIYTTEDENLIISTYKDQATAFNGVKKEQIAGKGVLNNQISSFIFEKLNAAGVATHFVEKLSDTEQLNKKVKIIPLEVVLRNYTAGSFSKRFGVDEGIALETPIVEFYYKNDDLDDPFINDEHVKFLQIAGDQQIAYLKEETRRINELLKVWFAEIGLKLIDFKLEFGFDKDGKIILADEFSPDNCRLWDADGNHMDKDVFRRGLGELTDVYEIVWEKLQELK</sequence>
<proteinExistence type="inferred from homology"/>